<protein>
    <recommendedName>
        <fullName evidence="1">Nucleoprotein</fullName>
    </recommendedName>
    <alternativeName>
        <fullName evidence="1">Nucleocapsid protein</fullName>
        <shortName evidence="1">NC</shortName>
        <shortName evidence="1">Protein N</shortName>
    </alternativeName>
</protein>
<name>NCAP_IBVBC</name>
<comment type="function">
    <text evidence="1">Packages the positive strand viral genome RNA into a helical ribonucleocapsid (RNP) and plays a fundamental role during virion assembly through its interactions with the viral genome and membrane protein M. Plays an important role in enhancing the efficiency of subgenomic viral RNA transcription as well as viral replication.</text>
</comment>
<comment type="subunit">
    <text evidence="1">Homooligomer. Both monomeric and oligomeric forms interact with RNA. Interacts with protein M. Interacts with NSP3; this interaction serves to tether the genome to the newly translated replicase-transcriptase complex at a very early stage of infection.</text>
</comment>
<comment type="subcellular location">
    <subcellularLocation>
        <location evidence="1">Virion</location>
    </subcellularLocation>
    <subcellularLocation>
        <location evidence="1">Host endoplasmic reticulum-Golgi intermediate compartment</location>
    </subcellularLocation>
    <subcellularLocation>
        <location evidence="1">Host Golgi apparatus</location>
    </subcellularLocation>
    <text evidence="1">Located inside the virion, complexed with the viral RNA. Probably associates with ER-derived membranes where it participates in viral RNA synthesis and virus budding.</text>
</comment>
<comment type="PTM">
    <text evidence="1">ADP-ribosylated. The ADP-ribosylation is retained in the virion during infection.</text>
</comment>
<comment type="PTM">
    <text evidence="1">Phosphorylated on serine and threonine residues.</text>
</comment>
<comment type="similarity">
    <text evidence="1">Belongs to the gammacoronavirus nucleocapsid protein family.</text>
</comment>
<feature type="chain" id="PRO_0000105977" description="Nucleoprotein">
    <location>
        <begin position="1"/>
        <end position="409"/>
    </location>
</feature>
<feature type="domain" description="CoV N NTD" evidence="2">
    <location>
        <begin position="31"/>
        <end position="156"/>
    </location>
</feature>
<feature type="domain" description="CoV N CTD" evidence="3">
    <location>
        <begin position="215"/>
        <end position="331"/>
    </location>
</feature>
<feature type="region of interest" description="Disordered" evidence="4">
    <location>
        <begin position="1"/>
        <end position="84"/>
    </location>
</feature>
<feature type="region of interest" description="RNA-binding" evidence="1">
    <location>
        <begin position="29"/>
        <end position="160"/>
    </location>
</feature>
<feature type="region of interest" description="Disordered" evidence="4">
    <location>
        <begin position="121"/>
        <end position="194"/>
    </location>
</feature>
<feature type="region of interest" description="Dimerization" evidence="1">
    <location>
        <begin position="226"/>
        <end position="333"/>
    </location>
</feature>
<feature type="region of interest" description="Disordered" evidence="4">
    <location>
        <begin position="327"/>
        <end position="396"/>
    </location>
</feature>
<feature type="compositionally biased region" description="Low complexity" evidence="4">
    <location>
        <begin position="15"/>
        <end position="31"/>
    </location>
</feature>
<feature type="compositionally biased region" description="Basic residues" evidence="4">
    <location>
        <begin position="70"/>
        <end position="84"/>
    </location>
</feature>
<feature type="compositionally biased region" description="Low complexity" evidence="4">
    <location>
        <begin position="162"/>
        <end position="179"/>
    </location>
</feature>
<feature type="compositionally biased region" description="Basic and acidic residues" evidence="4">
    <location>
        <begin position="180"/>
        <end position="192"/>
    </location>
</feature>
<feature type="compositionally biased region" description="Basic residues" evidence="4">
    <location>
        <begin position="358"/>
        <end position="367"/>
    </location>
</feature>
<feature type="compositionally biased region" description="Basic and acidic residues" evidence="4">
    <location>
        <begin position="368"/>
        <end position="384"/>
    </location>
</feature>
<feature type="modified residue" description="Phosphoserine; by host" evidence="1">
    <location>
        <position position="190"/>
    </location>
</feature>
<feature type="modified residue" description="Phosphoserine; by host" evidence="1">
    <location>
        <position position="192"/>
    </location>
</feature>
<feature type="modified residue" description="Phosphothreonine; by host" evidence="1">
    <location>
        <position position="378"/>
    </location>
</feature>
<feature type="modified residue" description="Phosphoserine; by host" evidence="1">
    <location>
        <position position="379"/>
    </location>
</feature>
<feature type="disulfide bond" evidence="1">
    <location>
        <begin position="281"/>
        <end position="308"/>
    </location>
</feature>
<feature type="disulfide bond" evidence="1">
    <location>
        <begin position="320"/>
        <end position="323"/>
    </location>
</feature>
<proteinExistence type="evidence at protein level"/>
<keyword id="KW-0002">3D-structure</keyword>
<keyword id="KW-0013">ADP-ribosylation</keyword>
<keyword id="KW-1015">Disulfide bond</keyword>
<keyword id="KW-1040">Host Golgi apparatus</keyword>
<keyword id="KW-0597">Phosphoprotein</keyword>
<keyword id="KW-0687">Ribonucleoprotein</keyword>
<keyword id="KW-0694">RNA-binding</keyword>
<keyword id="KW-0804">Transcription</keyword>
<keyword id="KW-0805">Transcription regulation</keyword>
<keyword id="KW-0543">Viral nucleoprotein</keyword>
<keyword id="KW-0946">Virion</keyword>
<gene>
    <name evidence="1" type="primary">N</name>
    <name type="ORF">6</name>
</gene>
<reference key="1">
    <citation type="journal article" date="2001" name="J. Virol.">
        <title>Reverse genetics system for the avian coronavirus infectious bronchitis virus.</title>
        <authorList>
            <person name="Casais R."/>
            <person name="Thiel V."/>
            <person name="Siddell S.G."/>
            <person name="Cavanagh D."/>
            <person name="Britton P."/>
        </authorList>
    </citation>
    <scope>NUCLEOTIDE SEQUENCE [GENOMIC RNA]</scope>
</reference>
<dbReference type="EMBL" id="AJ311317">
    <property type="protein sequence ID" value="CAC39121.1"/>
    <property type="molecule type" value="Genomic_RNA"/>
</dbReference>
<dbReference type="PDB" id="2BTL">
    <property type="method" value="X-ray"/>
    <property type="resolution" value="1.95 A"/>
    <property type="chains" value="A=29-160"/>
</dbReference>
<dbReference type="PDB" id="2BXX">
    <property type="method" value="X-ray"/>
    <property type="resolution" value="1.85 A"/>
    <property type="chains" value="A/B=29-160"/>
</dbReference>
<dbReference type="PDBsum" id="2BTL"/>
<dbReference type="PDBsum" id="2BXX"/>
<dbReference type="SMR" id="P69597"/>
<dbReference type="Proteomes" id="UP000114388">
    <property type="component" value="Genome"/>
</dbReference>
<dbReference type="GO" id="GO:0044172">
    <property type="term" value="C:host cell endoplasmic reticulum-Golgi intermediate compartment"/>
    <property type="evidence" value="ECO:0007669"/>
    <property type="project" value="UniProtKB-SubCell"/>
</dbReference>
<dbReference type="GO" id="GO:0044177">
    <property type="term" value="C:host cell Golgi apparatus"/>
    <property type="evidence" value="ECO:0007669"/>
    <property type="project" value="UniProtKB-SubCell"/>
</dbReference>
<dbReference type="GO" id="GO:1990904">
    <property type="term" value="C:ribonucleoprotein complex"/>
    <property type="evidence" value="ECO:0007669"/>
    <property type="project" value="UniProtKB-KW"/>
</dbReference>
<dbReference type="GO" id="GO:0019013">
    <property type="term" value="C:viral nucleocapsid"/>
    <property type="evidence" value="ECO:0007669"/>
    <property type="project" value="UniProtKB-UniRule"/>
</dbReference>
<dbReference type="GO" id="GO:0003723">
    <property type="term" value="F:RNA binding"/>
    <property type="evidence" value="ECO:0007669"/>
    <property type="project" value="UniProtKB-UniRule"/>
</dbReference>
<dbReference type="CDD" id="cd21595">
    <property type="entry name" value="CoV_N-CTD"/>
    <property type="match status" value="1"/>
</dbReference>
<dbReference type="CDD" id="cd21554">
    <property type="entry name" value="CoV_N-NTD"/>
    <property type="match status" value="1"/>
</dbReference>
<dbReference type="HAMAP" id="MF_04097">
    <property type="entry name" value="GAMMA_CORONA_NCAP"/>
    <property type="match status" value="1"/>
</dbReference>
<dbReference type="InterPro" id="IPR044344">
    <property type="entry name" value="N_prot_C_CoV"/>
</dbReference>
<dbReference type="InterPro" id="IPR044345">
    <property type="entry name" value="N_prot_N_CoV"/>
</dbReference>
<dbReference type="InterPro" id="IPR042547">
    <property type="entry name" value="NCAP_gCoV"/>
</dbReference>
<dbReference type="InterPro" id="IPR001218">
    <property type="entry name" value="Nucleocap_CoV"/>
</dbReference>
<dbReference type="InterPro" id="IPR037179">
    <property type="entry name" value="Nucleocapsid_C"/>
</dbReference>
<dbReference type="InterPro" id="IPR037195">
    <property type="entry name" value="Nucleocapsid_N"/>
</dbReference>
<dbReference type="Pfam" id="PF00937">
    <property type="entry name" value="CoV_nucleocap"/>
    <property type="match status" value="1"/>
</dbReference>
<dbReference type="PIRSF" id="PIRSF003888">
    <property type="entry name" value="Corona_nucleocap"/>
    <property type="match status" value="1"/>
</dbReference>
<dbReference type="SUPFAM" id="SSF110304">
    <property type="entry name" value="Coronavirus RNA-binding domain"/>
    <property type="match status" value="1"/>
</dbReference>
<dbReference type="SUPFAM" id="SSF103068">
    <property type="entry name" value="Nucleocapsid protein dimerization domain"/>
    <property type="match status" value="1"/>
</dbReference>
<dbReference type="PROSITE" id="PS51929">
    <property type="entry name" value="COV_N_CTD"/>
    <property type="match status" value="1"/>
</dbReference>
<dbReference type="PROSITE" id="PS51928">
    <property type="entry name" value="COV_N_NTD"/>
    <property type="match status" value="1"/>
</dbReference>
<organismHost>
    <name type="scientific">Gallus gallus</name>
    <name type="common">Chicken</name>
    <dbReference type="NCBI Taxonomy" id="9031"/>
</organismHost>
<accession>P69597</accession>
<accession>Q89902</accession>
<sequence length="409" mass="45032">MASGKAAGKTDAPAPVIKLGGPKPPKVGSSGNASWFQAIKAKKLNTPPPKFEGSGVPDNENIKPSQQHGYWRRQARFKPGKGGRKPVPDAWYFYYTGTGPAADLNWGDTQDGIVWVAAKGADTKSRSNQGTRDPDKFDQYPLRFSDGGPDGNFRWDFIPLNRGRSGRSTAASSAAASRAPSREGSRGRRSDSGDDLIARAAKIIQDQQKKGSRITKAKADEMAHRRYCKRTIPPNYRVDQVFGPRTKGKEGNFGDDKMNEEGIKDGRVTAMLNLVPSSHACLFGSRVTPKLQLDGLHLRFEFTTVVPCDDPQFDNYVKICDQCVDGVGTRPKDDEPKPKSRSSSRPATRGNSPAPRQQRPKKEKKLKKQDDEADKALTSDEERNNAQLEFYDEPKVINWGDAALGENEL</sequence>
<organism>
    <name type="scientific">Avian infectious bronchitis virus (strain Beaudette CK)</name>
    <name type="common">IBV</name>
    <dbReference type="NCBI Taxonomy" id="160235"/>
    <lineage>
        <taxon>Viruses</taxon>
        <taxon>Riboviria</taxon>
        <taxon>Orthornavirae</taxon>
        <taxon>Pisuviricota</taxon>
        <taxon>Pisoniviricetes</taxon>
        <taxon>Nidovirales</taxon>
        <taxon>Cornidovirineae</taxon>
        <taxon>Coronaviridae</taxon>
        <taxon>Orthocoronavirinae</taxon>
        <taxon>Gammacoronavirus</taxon>
        <taxon>Igacovirus</taxon>
        <taxon>Avian coronavirus</taxon>
    </lineage>
</organism>
<evidence type="ECO:0000255" key="1">
    <source>
        <dbReference type="HAMAP-Rule" id="MF_04097"/>
    </source>
</evidence>
<evidence type="ECO:0000255" key="2">
    <source>
        <dbReference type="PROSITE-ProRule" id="PRU01276"/>
    </source>
</evidence>
<evidence type="ECO:0000255" key="3">
    <source>
        <dbReference type="PROSITE-ProRule" id="PRU01277"/>
    </source>
</evidence>
<evidence type="ECO:0000256" key="4">
    <source>
        <dbReference type="SAM" id="MobiDB-lite"/>
    </source>
</evidence>